<proteinExistence type="inferred from homology"/>
<protein>
    <recommendedName>
        <fullName>Interferon beta</fullName>
        <shortName>IFN-beta</shortName>
    </recommendedName>
</protein>
<gene>
    <name type="primary">IFNB1</name>
    <name type="synonym">IFNB</name>
</gene>
<evidence type="ECO:0000250" key="1">
    <source>
        <dbReference type="UniProtKB" id="P01574"/>
    </source>
</evidence>
<evidence type="ECO:0000250" key="2">
    <source>
        <dbReference type="UniProtKB" id="P01575"/>
    </source>
</evidence>
<evidence type="ECO:0000250" key="3">
    <source>
        <dbReference type="UniProtKB" id="P70499"/>
    </source>
</evidence>
<evidence type="ECO:0000255" key="4"/>
<evidence type="ECO:0000305" key="5"/>
<dbReference type="EMBL" id="M14546">
    <property type="protein sequence ID" value="AAA30954.1"/>
    <property type="molecule type" value="Genomic_DNA"/>
</dbReference>
<dbReference type="PIR" id="G24912">
    <property type="entry name" value="IVHOBI"/>
</dbReference>
<dbReference type="RefSeq" id="NP_001092910.1">
    <property type="nucleotide sequence ID" value="NM_001099440.1"/>
</dbReference>
<dbReference type="SMR" id="P05012"/>
<dbReference type="FunCoup" id="P05012">
    <property type="interactions" value="302"/>
</dbReference>
<dbReference type="STRING" id="9796.ENSECAP00000004620"/>
<dbReference type="GlyCosmos" id="P05012">
    <property type="glycosylation" value="2 sites, No reported glycans"/>
</dbReference>
<dbReference type="PaxDb" id="9796-ENSECAP00000004620"/>
<dbReference type="GeneID" id="100052545"/>
<dbReference type="KEGG" id="ecb:100052545"/>
<dbReference type="CTD" id="3456"/>
<dbReference type="HOGENOM" id="CLU_109427_1_0_1"/>
<dbReference type="InParanoid" id="P05012"/>
<dbReference type="OMA" id="HWQKEHL"/>
<dbReference type="OrthoDB" id="8922121at2759"/>
<dbReference type="TreeFam" id="TF336177"/>
<dbReference type="Proteomes" id="UP000002281">
    <property type="component" value="Chromosome 23"/>
</dbReference>
<dbReference type="Bgee" id="ENSECAG00000006484">
    <property type="expression patterns" value="Expressed in trophectoderm"/>
</dbReference>
<dbReference type="GO" id="GO:0005615">
    <property type="term" value="C:extracellular space"/>
    <property type="evidence" value="ECO:0000318"/>
    <property type="project" value="GO_Central"/>
</dbReference>
<dbReference type="GO" id="GO:0005125">
    <property type="term" value="F:cytokine activity"/>
    <property type="evidence" value="ECO:0000318"/>
    <property type="project" value="GO_Central"/>
</dbReference>
<dbReference type="GO" id="GO:0005132">
    <property type="term" value="F:type I interferon receptor binding"/>
    <property type="evidence" value="ECO:0000318"/>
    <property type="project" value="GO_Central"/>
</dbReference>
<dbReference type="GO" id="GO:0002250">
    <property type="term" value="P:adaptive immune response"/>
    <property type="evidence" value="ECO:0000318"/>
    <property type="project" value="GO_Central"/>
</dbReference>
<dbReference type="GO" id="GO:0002312">
    <property type="term" value="P:B cell activation involved in immune response"/>
    <property type="evidence" value="ECO:0000318"/>
    <property type="project" value="GO_Central"/>
</dbReference>
<dbReference type="GO" id="GO:0051607">
    <property type="term" value="P:defense response to virus"/>
    <property type="evidence" value="ECO:0000250"/>
    <property type="project" value="UniProtKB"/>
</dbReference>
<dbReference type="GO" id="GO:0006959">
    <property type="term" value="P:humoral immune response"/>
    <property type="evidence" value="ECO:0000318"/>
    <property type="project" value="GO_Central"/>
</dbReference>
<dbReference type="GO" id="GO:0002323">
    <property type="term" value="P:natural killer cell activation involved in immune response"/>
    <property type="evidence" value="ECO:0000318"/>
    <property type="project" value="GO_Central"/>
</dbReference>
<dbReference type="GO" id="GO:0140123">
    <property type="term" value="P:negative regulation of Lewy body formation"/>
    <property type="evidence" value="ECO:0000250"/>
    <property type="project" value="UniProtKB"/>
</dbReference>
<dbReference type="GO" id="GO:0070050">
    <property type="term" value="P:neuron cellular homeostasis"/>
    <property type="evidence" value="ECO:0000250"/>
    <property type="project" value="UniProtKB"/>
</dbReference>
<dbReference type="GO" id="GO:0010508">
    <property type="term" value="P:positive regulation of autophagy"/>
    <property type="evidence" value="ECO:0000250"/>
    <property type="project" value="UniProtKB"/>
</dbReference>
<dbReference type="GO" id="GO:0043330">
    <property type="term" value="P:response to exogenous dsRNA"/>
    <property type="evidence" value="ECO:0000318"/>
    <property type="project" value="GO_Central"/>
</dbReference>
<dbReference type="GO" id="GO:0002286">
    <property type="term" value="P:T cell activation involved in immune response"/>
    <property type="evidence" value="ECO:0000318"/>
    <property type="project" value="GO_Central"/>
</dbReference>
<dbReference type="GO" id="GO:0060337">
    <property type="term" value="P:type I interferon-mediated signaling pathway"/>
    <property type="evidence" value="ECO:0000318"/>
    <property type="project" value="GO_Central"/>
</dbReference>
<dbReference type="CDD" id="cd00095">
    <property type="entry name" value="IFab"/>
    <property type="match status" value="1"/>
</dbReference>
<dbReference type="FunFam" id="1.20.1250.10:FF:000026">
    <property type="entry name" value="Interferon beta"/>
    <property type="match status" value="1"/>
</dbReference>
<dbReference type="Gene3D" id="1.20.1250.10">
    <property type="match status" value="1"/>
</dbReference>
<dbReference type="InterPro" id="IPR009079">
    <property type="entry name" value="4_helix_cytokine-like_core"/>
</dbReference>
<dbReference type="InterPro" id="IPR000471">
    <property type="entry name" value="Interferon_alpha/beta/delta"/>
</dbReference>
<dbReference type="PANTHER" id="PTHR11691:SF73">
    <property type="entry name" value="INTERFERON BETA"/>
    <property type="match status" value="1"/>
</dbReference>
<dbReference type="PANTHER" id="PTHR11691">
    <property type="entry name" value="TYPE I INTERFERON"/>
    <property type="match status" value="1"/>
</dbReference>
<dbReference type="Pfam" id="PF00143">
    <property type="entry name" value="Interferon"/>
    <property type="match status" value="1"/>
</dbReference>
<dbReference type="PRINTS" id="PR00266">
    <property type="entry name" value="INTERFERONAB"/>
</dbReference>
<dbReference type="SMART" id="SM00076">
    <property type="entry name" value="IFabd"/>
    <property type="match status" value="1"/>
</dbReference>
<dbReference type="SUPFAM" id="SSF47266">
    <property type="entry name" value="4-helical cytokines"/>
    <property type="match status" value="1"/>
</dbReference>
<dbReference type="PROSITE" id="PS00252">
    <property type="entry name" value="INTERFERON_A_B_D"/>
    <property type="match status" value="1"/>
</dbReference>
<sequence>MTYRWILPMALLLCFSTTALSVNYDLLRSQLRSSNSACLMLLRQLNGAPQRCPEDTMNFQVPEEIEQAQQFQKEDAALVIYEMLQHTWRIFRRNFASTGWNETIVKNLLVEVHLQMDRLETNLEEIMEEESSTWGNTTILRLKKYYGRISQYLKAKKYSHCAWTVVQAEMLRNLAFLNGLTDYLQN</sequence>
<organism>
    <name type="scientific">Equus caballus</name>
    <name type="common">Horse</name>
    <dbReference type="NCBI Taxonomy" id="9796"/>
    <lineage>
        <taxon>Eukaryota</taxon>
        <taxon>Metazoa</taxon>
        <taxon>Chordata</taxon>
        <taxon>Craniata</taxon>
        <taxon>Vertebrata</taxon>
        <taxon>Euteleostomi</taxon>
        <taxon>Mammalia</taxon>
        <taxon>Eutheria</taxon>
        <taxon>Laurasiatheria</taxon>
        <taxon>Perissodactyla</taxon>
        <taxon>Equidae</taxon>
        <taxon>Equus</taxon>
    </lineage>
</organism>
<reference key="1">
    <citation type="journal article" date="1986" name="DNA">
        <title>Molecular cloning and expression in Escherichia coli of equine type I interferons.</title>
        <authorList>
            <person name="Himmler A."/>
            <person name="Hauptmann R."/>
            <person name="Adolf G.R."/>
            <person name="Swetly P."/>
        </authorList>
    </citation>
    <scope>NUCLEOTIDE SEQUENCE [GENOMIC DNA]</scope>
</reference>
<comment type="function">
    <text evidence="1 2">Type I interferon cytokine that plays a key role in the innate immune response to infection, developing tumors and other inflammatory stimuli. Signals via binding to high-affinity (IFNAR2) and low-affinity (IFNAR1) heterodimeric receptor, activating the canonical Jak-STAT signaling pathway resulting in transcriptional activation or repression of interferon-regulated genes that encode the effectors of the interferon response, such as antiviral proteins, regulators of cell proliferation and differentiation, and immunoregulatory proteins (By similarity). Signals mostly via binding to a IFNAR1-IFNAR2 heterodimeric receptor, but can also function with IFNAR1 alone and independently of Jak-STAT pathways. Elicits a wide variety of responses, including antiviral and antibacterial activities, and can regulate the development of B-cells, myelopoiesis and lipopolysaccharide (LPS)-inducible production of tumor necrosis factor. Plays a role in neuronal homeostasis by regulating dopamine turnover and protecting dopaminergic neurons: acts by promoting neuronal autophagy and alpha-synuclein clearance, thereby preventing dopaminergic neuron loss. IFNB1 is more potent than interferon-alpha (IFN-alpha) in inducing the apoptotic and antiproliferative pathways required for control of tumor cell growth (By similarity).</text>
</comment>
<comment type="subunit">
    <text evidence="1">Monomer.</text>
</comment>
<comment type="subcellular location">
    <subcellularLocation>
        <location evidence="1">Secreted</location>
    </subcellularLocation>
</comment>
<comment type="similarity">
    <text evidence="5">Belongs to the alpha/beta interferon family.</text>
</comment>
<accession>P05012</accession>
<name>IFNB_HORSE</name>
<keyword id="KW-0051">Antiviral defense</keyword>
<keyword id="KW-0202">Cytokine</keyword>
<keyword id="KW-1015">Disulfide bond</keyword>
<keyword id="KW-0325">Glycoprotein</keyword>
<keyword id="KW-0597">Phosphoprotein</keyword>
<keyword id="KW-1185">Reference proteome</keyword>
<keyword id="KW-0964">Secreted</keyword>
<keyword id="KW-0732">Signal</keyword>
<feature type="signal peptide" evidence="4">
    <location>
        <begin position="1"/>
        <end position="21"/>
    </location>
</feature>
<feature type="chain" id="PRO_0000016401" description="Interferon beta">
    <location>
        <begin position="22"/>
        <end position="186"/>
    </location>
</feature>
<feature type="modified residue" description="Phosphotyrosine" evidence="3">
    <location>
        <position position="24"/>
    </location>
</feature>
<feature type="glycosylation site" description="N-linked (GlcNAc...) asparagine" evidence="4">
    <location>
        <position position="101"/>
    </location>
</feature>
<feature type="glycosylation site" description="N-linked (GlcNAc...) asparagine" evidence="4">
    <location>
        <position position="136"/>
    </location>
</feature>
<feature type="disulfide bond" evidence="1">
    <location>
        <begin position="52"/>
        <end position="161"/>
    </location>
</feature>